<accession>Q2IPT7</accession>
<dbReference type="EC" id="6.1.1.1" evidence="1"/>
<dbReference type="EMBL" id="CP000251">
    <property type="protein sequence ID" value="ABC80819.1"/>
    <property type="molecule type" value="Genomic_DNA"/>
</dbReference>
<dbReference type="RefSeq" id="WP_011420102.1">
    <property type="nucleotide sequence ID" value="NC_007760.1"/>
</dbReference>
<dbReference type="SMR" id="Q2IPT7"/>
<dbReference type="STRING" id="290397.Adeh_1044"/>
<dbReference type="KEGG" id="ade:Adeh_1044"/>
<dbReference type="eggNOG" id="COG0162">
    <property type="taxonomic scope" value="Bacteria"/>
</dbReference>
<dbReference type="HOGENOM" id="CLU_024003_0_3_7"/>
<dbReference type="OrthoDB" id="9804243at2"/>
<dbReference type="Proteomes" id="UP000001935">
    <property type="component" value="Chromosome"/>
</dbReference>
<dbReference type="GO" id="GO:0005829">
    <property type="term" value="C:cytosol"/>
    <property type="evidence" value="ECO:0007669"/>
    <property type="project" value="TreeGrafter"/>
</dbReference>
<dbReference type="GO" id="GO:0005524">
    <property type="term" value="F:ATP binding"/>
    <property type="evidence" value="ECO:0007669"/>
    <property type="project" value="UniProtKB-UniRule"/>
</dbReference>
<dbReference type="GO" id="GO:0003723">
    <property type="term" value="F:RNA binding"/>
    <property type="evidence" value="ECO:0007669"/>
    <property type="project" value="UniProtKB-KW"/>
</dbReference>
<dbReference type="GO" id="GO:0004831">
    <property type="term" value="F:tyrosine-tRNA ligase activity"/>
    <property type="evidence" value="ECO:0007669"/>
    <property type="project" value="UniProtKB-UniRule"/>
</dbReference>
<dbReference type="GO" id="GO:0006437">
    <property type="term" value="P:tyrosyl-tRNA aminoacylation"/>
    <property type="evidence" value="ECO:0007669"/>
    <property type="project" value="UniProtKB-UniRule"/>
</dbReference>
<dbReference type="CDD" id="cd00805">
    <property type="entry name" value="TyrRS_core"/>
    <property type="match status" value="1"/>
</dbReference>
<dbReference type="FunFam" id="1.10.240.10:FF:000001">
    <property type="entry name" value="Tyrosine--tRNA ligase"/>
    <property type="match status" value="1"/>
</dbReference>
<dbReference type="Gene3D" id="3.40.50.620">
    <property type="entry name" value="HUPs"/>
    <property type="match status" value="1"/>
</dbReference>
<dbReference type="Gene3D" id="3.10.290.10">
    <property type="entry name" value="RNA-binding S4 domain"/>
    <property type="match status" value="1"/>
</dbReference>
<dbReference type="Gene3D" id="1.10.240.10">
    <property type="entry name" value="Tyrosyl-Transfer RNA Synthetase"/>
    <property type="match status" value="1"/>
</dbReference>
<dbReference type="HAMAP" id="MF_02006">
    <property type="entry name" value="Tyr_tRNA_synth_type1"/>
    <property type="match status" value="1"/>
</dbReference>
<dbReference type="InterPro" id="IPR001412">
    <property type="entry name" value="aa-tRNA-synth_I_CS"/>
</dbReference>
<dbReference type="InterPro" id="IPR002305">
    <property type="entry name" value="aa-tRNA-synth_Ic"/>
</dbReference>
<dbReference type="InterPro" id="IPR014729">
    <property type="entry name" value="Rossmann-like_a/b/a_fold"/>
</dbReference>
<dbReference type="InterPro" id="IPR036986">
    <property type="entry name" value="S4_RNA-bd_sf"/>
</dbReference>
<dbReference type="InterPro" id="IPR054608">
    <property type="entry name" value="SYY-like_C"/>
</dbReference>
<dbReference type="InterPro" id="IPR002307">
    <property type="entry name" value="Tyr-tRNA-ligase"/>
</dbReference>
<dbReference type="InterPro" id="IPR024088">
    <property type="entry name" value="Tyr-tRNA-ligase_bac-type"/>
</dbReference>
<dbReference type="InterPro" id="IPR024107">
    <property type="entry name" value="Tyr-tRNA-ligase_bac_1"/>
</dbReference>
<dbReference type="NCBIfam" id="TIGR00234">
    <property type="entry name" value="tyrS"/>
    <property type="match status" value="1"/>
</dbReference>
<dbReference type="PANTHER" id="PTHR11766:SF0">
    <property type="entry name" value="TYROSINE--TRNA LIGASE, MITOCHONDRIAL"/>
    <property type="match status" value="1"/>
</dbReference>
<dbReference type="PANTHER" id="PTHR11766">
    <property type="entry name" value="TYROSYL-TRNA SYNTHETASE"/>
    <property type="match status" value="1"/>
</dbReference>
<dbReference type="Pfam" id="PF22421">
    <property type="entry name" value="SYY_C-terminal"/>
    <property type="match status" value="1"/>
</dbReference>
<dbReference type="Pfam" id="PF00579">
    <property type="entry name" value="tRNA-synt_1b"/>
    <property type="match status" value="1"/>
</dbReference>
<dbReference type="PRINTS" id="PR01040">
    <property type="entry name" value="TRNASYNTHTYR"/>
</dbReference>
<dbReference type="SUPFAM" id="SSF55174">
    <property type="entry name" value="Alpha-L RNA-binding motif"/>
    <property type="match status" value="1"/>
</dbReference>
<dbReference type="SUPFAM" id="SSF52374">
    <property type="entry name" value="Nucleotidylyl transferase"/>
    <property type="match status" value="1"/>
</dbReference>
<dbReference type="PROSITE" id="PS00178">
    <property type="entry name" value="AA_TRNA_LIGASE_I"/>
    <property type="match status" value="1"/>
</dbReference>
<dbReference type="PROSITE" id="PS50889">
    <property type="entry name" value="S4"/>
    <property type="match status" value="1"/>
</dbReference>
<reference key="1">
    <citation type="submission" date="2006-01" db="EMBL/GenBank/DDBJ databases">
        <title>Complete sequence of Anaeromyxobacter dehalogenans 2CP-C.</title>
        <authorList>
            <person name="Copeland A."/>
            <person name="Lucas S."/>
            <person name="Lapidus A."/>
            <person name="Barry K."/>
            <person name="Detter J.C."/>
            <person name="Glavina T."/>
            <person name="Hammon N."/>
            <person name="Israni S."/>
            <person name="Pitluck S."/>
            <person name="Brettin T."/>
            <person name="Bruce D."/>
            <person name="Han C."/>
            <person name="Tapia R."/>
            <person name="Gilna P."/>
            <person name="Kiss H."/>
            <person name="Schmutz J."/>
            <person name="Larimer F."/>
            <person name="Land M."/>
            <person name="Kyrpides N."/>
            <person name="Anderson I."/>
            <person name="Sanford R.A."/>
            <person name="Ritalahti K.M."/>
            <person name="Thomas H.S."/>
            <person name="Kirby J.R."/>
            <person name="Zhulin I.B."/>
            <person name="Loeffler F.E."/>
            <person name="Richardson P."/>
        </authorList>
    </citation>
    <scope>NUCLEOTIDE SEQUENCE [LARGE SCALE GENOMIC DNA]</scope>
    <source>
        <strain>2CP-C</strain>
    </source>
</reference>
<keyword id="KW-0030">Aminoacyl-tRNA synthetase</keyword>
<keyword id="KW-0067">ATP-binding</keyword>
<keyword id="KW-0963">Cytoplasm</keyword>
<keyword id="KW-0436">Ligase</keyword>
<keyword id="KW-0547">Nucleotide-binding</keyword>
<keyword id="KW-0648">Protein biosynthesis</keyword>
<keyword id="KW-1185">Reference proteome</keyword>
<keyword id="KW-0694">RNA-binding</keyword>
<comment type="function">
    <text evidence="1">Catalyzes the attachment of tyrosine to tRNA(Tyr) in a two-step reaction: tyrosine is first activated by ATP to form Tyr-AMP and then transferred to the acceptor end of tRNA(Tyr).</text>
</comment>
<comment type="catalytic activity">
    <reaction evidence="1">
        <text>tRNA(Tyr) + L-tyrosine + ATP = L-tyrosyl-tRNA(Tyr) + AMP + diphosphate + H(+)</text>
        <dbReference type="Rhea" id="RHEA:10220"/>
        <dbReference type="Rhea" id="RHEA-COMP:9706"/>
        <dbReference type="Rhea" id="RHEA-COMP:9707"/>
        <dbReference type="ChEBI" id="CHEBI:15378"/>
        <dbReference type="ChEBI" id="CHEBI:30616"/>
        <dbReference type="ChEBI" id="CHEBI:33019"/>
        <dbReference type="ChEBI" id="CHEBI:58315"/>
        <dbReference type="ChEBI" id="CHEBI:78442"/>
        <dbReference type="ChEBI" id="CHEBI:78536"/>
        <dbReference type="ChEBI" id="CHEBI:456215"/>
        <dbReference type="EC" id="6.1.1.1"/>
    </reaction>
</comment>
<comment type="subunit">
    <text evidence="1">Homodimer.</text>
</comment>
<comment type="subcellular location">
    <subcellularLocation>
        <location evidence="1">Cytoplasm</location>
    </subcellularLocation>
</comment>
<comment type="similarity">
    <text evidence="1">Belongs to the class-I aminoacyl-tRNA synthetase family. TyrS type 1 subfamily.</text>
</comment>
<feature type="chain" id="PRO_0000234664" description="Tyrosine--tRNA ligase">
    <location>
        <begin position="1"/>
        <end position="420"/>
    </location>
</feature>
<feature type="domain" description="S4 RNA-binding" evidence="1">
    <location>
        <begin position="353"/>
        <end position="419"/>
    </location>
</feature>
<feature type="short sequence motif" description="'HIGH' region">
    <location>
        <begin position="38"/>
        <end position="47"/>
    </location>
</feature>
<feature type="short sequence motif" description="'KMSKS' region">
    <location>
        <begin position="227"/>
        <end position="231"/>
    </location>
</feature>
<feature type="binding site" evidence="1">
    <location>
        <position position="33"/>
    </location>
    <ligand>
        <name>L-tyrosine</name>
        <dbReference type="ChEBI" id="CHEBI:58315"/>
    </ligand>
</feature>
<feature type="binding site" evidence="1">
    <location>
        <position position="167"/>
    </location>
    <ligand>
        <name>L-tyrosine</name>
        <dbReference type="ChEBI" id="CHEBI:58315"/>
    </ligand>
</feature>
<feature type="binding site" evidence="1">
    <location>
        <position position="171"/>
    </location>
    <ligand>
        <name>L-tyrosine</name>
        <dbReference type="ChEBI" id="CHEBI:58315"/>
    </ligand>
</feature>
<feature type="binding site" evidence="1">
    <location>
        <position position="230"/>
    </location>
    <ligand>
        <name>ATP</name>
        <dbReference type="ChEBI" id="CHEBI:30616"/>
    </ligand>
</feature>
<proteinExistence type="inferred from homology"/>
<gene>
    <name evidence="1" type="primary">tyrS</name>
    <name type="ordered locus">Adeh_1044</name>
</gene>
<evidence type="ECO:0000255" key="1">
    <source>
        <dbReference type="HAMAP-Rule" id="MF_02006"/>
    </source>
</evidence>
<protein>
    <recommendedName>
        <fullName evidence="1">Tyrosine--tRNA ligase</fullName>
        <ecNumber evidence="1">6.1.1.1</ecNumber>
    </recommendedName>
    <alternativeName>
        <fullName evidence="1">Tyrosyl-tRNA synthetase</fullName>
        <shortName evidence="1">TyrRS</shortName>
    </alternativeName>
</protein>
<organism>
    <name type="scientific">Anaeromyxobacter dehalogenans (strain 2CP-C)</name>
    <dbReference type="NCBI Taxonomy" id="290397"/>
    <lineage>
        <taxon>Bacteria</taxon>
        <taxon>Pseudomonadati</taxon>
        <taxon>Myxococcota</taxon>
        <taxon>Myxococcia</taxon>
        <taxon>Myxococcales</taxon>
        <taxon>Cystobacterineae</taxon>
        <taxon>Anaeromyxobacteraceae</taxon>
        <taxon>Anaeromyxobacter</taxon>
    </lineage>
</organism>
<name>SYY_ANADE</name>
<sequence>MQNLLEALVPRSLVHDQTPGLQARLAQGPITGYVGFDPTADSLHVGHLLAVMSLAWLQRCGGTPIIVVGGGTGMVGDPSGKRSERPVLSVEEIDRNVAAIRAQLERFVSFEGQNAARVRNNADWLRSIGLMEFLRDVGKHFTVNYMLAKDSVKGRMESGISFTEFSYQLIQAYDFWHLFHAERCELQMGGSDQWGNITAGAELVSRKDGASVHGLTFPLLTTASGTKFGKTEGGAVWLDPARTSPYKFFQFWLNTDDRDVERLLKFFTFLSLDEIAALLAEQARDPGKRPAQRRLAEDVTARVHGPDVTRSVIEASRILFGGTDLRAAGVDVLDVLAGEIPSATVTGDELAALTVADLLVKVGLAASKGEVRRGVAGRGFSLNGAVLESGDAKVAAGELLAGGYALLQKGKRNYALVKVR</sequence>